<evidence type="ECO:0000250" key="1"/>
<evidence type="ECO:0000255" key="2"/>
<evidence type="ECO:0000256" key="3">
    <source>
        <dbReference type="SAM" id="MobiDB-lite"/>
    </source>
</evidence>
<evidence type="ECO:0000305" key="4"/>
<name>MCA1_PICGU</name>
<comment type="function">
    <text evidence="1">Involved in cell death (apoptosis).</text>
</comment>
<comment type="similarity">
    <text evidence="4">Belongs to the peptidase C14B family.</text>
</comment>
<protein>
    <recommendedName>
        <fullName>Metacaspase-1</fullName>
        <ecNumber>3.4.22.-</ecNumber>
    </recommendedName>
</protein>
<sequence>MFPGSGRQTYQQQGYPPPQGAPQYNYGPPQGPPQGYYNGPPQGYNGPPQGPPPQNYNYGHYGPPQGQGQGYGQGGPAPQMYNNNRQSGAMNDVSTAPQRFGNTDMTYQLSNCSGRKKALLVGINYFGSSNELRGCVNDIKNMSNFLNRRFGYSYDDMVILTDDQNQRNKIPTKENIIRAMQWLVKDARPNDSLVFHYSGHGGITKDLDGDEDEGYDEVIYPVDFQQAGHIVDDDMHAIMVRPLPPGCKLTALFDSCHSGTALDLPFVYSTKGVVKEPNLWKDAGTDAFGAFMQYERGNIGGAISSIGGLLKKVTNSSSSNRQQVINIKASPADVISISGCKDDQTSADASINNNATGAMSWAFIKTMTDMPEQSYLSLLNNMRTLLKEKYSQKPQLSSSHPQDMNIRFIM</sequence>
<keyword id="KW-0053">Apoptosis</keyword>
<keyword id="KW-0378">Hydrolase</keyword>
<keyword id="KW-0645">Protease</keyword>
<keyword id="KW-1185">Reference proteome</keyword>
<keyword id="KW-0788">Thiol protease</keyword>
<keyword id="KW-0865">Zymogen</keyword>
<gene>
    <name type="primary">MCA1</name>
    <name type="ORF">PGUG_00072</name>
</gene>
<feature type="propeptide" id="PRO_0000333664" evidence="2">
    <location>
        <begin position="1"/>
        <end status="unknown"/>
    </location>
</feature>
<feature type="chain" id="PRO_0000333665" description="Metacaspase-1">
    <location>
        <begin status="unknown"/>
        <end position="410"/>
    </location>
</feature>
<feature type="region of interest" description="Disordered" evidence="3">
    <location>
        <begin position="1"/>
        <end position="94"/>
    </location>
</feature>
<feature type="compositionally biased region" description="Low complexity" evidence="3">
    <location>
        <begin position="21"/>
        <end position="47"/>
    </location>
</feature>
<feature type="compositionally biased region" description="Low complexity" evidence="3">
    <location>
        <begin position="55"/>
        <end position="64"/>
    </location>
</feature>
<feature type="compositionally biased region" description="Gly residues" evidence="3">
    <location>
        <begin position="65"/>
        <end position="75"/>
    </location>
</feature>
<feature type="compositionally biased region" description="Polar residues" evidence="3">
    <location>
        <begin position="80"/>
        <end position="94"/>
    </location>
</feature>
<feature type="active site" evidence="1">
    <location>
        <position position="200"/>
    </location>
</feature>
<feature type="active site" evidence="1">
    <location>
        <position position="256"/>
    </location>
</feature>
<dbReference type="EC" id="3.4.22.-"/>
<dbReference type="EMBL" id="CH408155">
    <property type="protein sequence ID" value="EDK35974.2"/>
    <property type="molecule type" value="Genomic_DNA"/>
</dbReference>
<dbReference type="RefSeq" id="XP_001486695.1">
    <property type="nucleotide sequence ID" value="XM_001486645.1"/>
</dbReference>
<dbReference type="SMR" id="A5D9W7"/>
<dbReference type="FunCoup" id="A5D9W7">
    <property type="interactions" value="364"/>
</dbReference>
<dbReference type="STRING" id="294746.A5D9W7"/>
<dbReference type="GeneID" id="5128747"/>
<dbReference type="KEGG" id="pgu:PGUG_00072"/>
<dbReference type="VEuPathDB" id="FungiDB:PGUG_00072"/>
<dbReference type="eggNOG" id="KOG1546">
    <property type="taxonomic scope" value="Eukaryota"/>
</dbReference>
<dbReference type="HOGENOM" id="CLU_029389_0_2_1"/>
<dbReference type="InParanoid" id="A5D9W7"/>
<dbReference type="OMA" id="IRMALQW"/>
<dbReference type="OrthoDB" id="3223806at2759"/>
<dbReference type="Proteomes" id="UP000001997">
    <property type="component" value="Unassembled WGS sequence"/>
</dbReference>
<dbReference type="GO" id="GO:0005829">
    <property type="term" value="C:cytosol"/>
    <property type="evidence" value="ECO:0007669"/>
    <property type="project" value="EnsemblFungi"/>
</dbReference>
<dbReference type="GO" id="GO:0005634">
    <property type="term" value="C:nucleus"/>
    <property type="evidence" value="ECO:0007669"/>
    <property type="project" value="EnsemblFungi"/>
</dbReference>
<dbReference type="GO" id="GO:0004198">
    <property type="term" value="F:calcium-dependent cysteine-type endopeptidase activity"/>
    <property type="evidence" value="ECO:0007669"/>
    <property type="project" value="EnsemblFungi"/>
</dbReference>
<dbReference type="GO" id="GO:0006915">
    <property type="term" value="P:apoptotic process"/>
    <property type="evidence" value="ECO:0007669"/>
    <property type="project" value="UniProtKB-KW"/>
</dbReference>
<dbReference type="GO" id="GO:0006515">
    <property type="term" value="P:protein quality control for misfolded or incompletely synthesized proteins"/>
    <property type="evidence" value="ECO:0007669"/>
    <property type="project" value="EnsemblFungi"/>
</dbReference>
<dbReference type="Gene3D" id="3.40.50.12660">
    <property type="match status" value="1"/>
</dbReference>
<dbReference type="InterPro" id="IPR029030">
    <property type="entry name" value="Caspase-like_dom_sf"/>
</dbReference>
<dbReference type="InterPro" id="IPR050452">
    <property type="entry name" value="Metacaspase"/>
</dbReference>
<dbReference type="InterPro" id="IPR011600">
    <property type="entry name" value="Pept_C14_caspase"/>
</dbReference>
<dbReference type="PANTHER" id="PTHR48104:SF30">
    <property type="entry name" value="METACASPASE-1"/>
    <property type="match status" value="1"/>
</dbReference>
<dbReference type="PANTHER" id="PTHR48104">
    <property type="entry name" value="METACASPASE-4"/>
    <property type="match status" value="1"/>
</dbReference>
<dbReference type="Pfam" id="PF00656">
    <property type="entry name" value="Peptidase_C14"/>
    <property type="match status" value="1"/>
</dbReference>
<dbReference type="SUPFAM" id="SSF52129">
    <property type="entry name" value="Caspase-like"/>
    <property type="match status" value="1"/>
</dbReference>
<accession>A5D9W7</accession>
<reference key="1">
    <citation type="journal article" date="2009" name="Nature">
        <title>Evolution of pathogenicity and sexual reproduction in eight Candida genomes.</title>
        <authorList>
            <person name="Butler G."/>
            <person name="Rasmussen M.D."/>
            <person name="Lin M.F."/>
            <person name="Santos M.A.S."/>
            <person name="Sakthikumar S."/>
            <person name="Munro C.A."/>
            <person name="Rheinbay E."/>
            <person name="Grabherr M."/>
            <person name="Forche A."/>
            <person name="Reedy J.L."/>
            <person name="Agrafioti I."/>
            <person name="Arnaud M.B."/>
            <person name="Bates S."/>
            <person name="Brown A.J.P."/>
            <person name="Brunke S."/>
            <person name="Costanzo M.C."/>
            <person name="Fitzpatrick D.A."/>
            <person name="de Groot P.W.J."/>
            <person name="Harris D."/>
            <person name="Hoyer L.L."/>
            <person name="Hube B."/>
            <person name="Klis F.M."/>
            <person name="Kodira C."/>
            <person name="Lennard N."/>
            <person name="Logue M.E."/>
            <person name="Martin R."/>
            <person name="Neiman A.M."/>
            <person name="Nikolaou E."/>
            <person name="Quail M.A."/>
            <person name="Quinn J."/>
            <person name="Santos M.C."/>
            <person name="Schmitzberger F.F."/>
            <person name="Sherlock G."/>
            <person name="Shah P."/>
            <person name="Silverstein K.A.T."/>
            <person name="Skrzypek M.S."/>
            <person name="Soll D."/>
            <person name="Staggs R."/>
            <person name="Stansfield I."/>
            <person name="Stumpf M.P.H."/>
            <person name="Sudbery P.E."/>
            <person name="Srikantha T."/>
            <person name="Zeng Q."/>
            <person name="Berman J."/>
            <person name="Berriman M."/>
            <person name="Heitman J."/>
            <person name="Gow N.A.R."/>
            <person name="Lorenz M.C."/>
            <person name="Birren B.W."/>
            <person name="Kellis M."/>
            <person name="Cuomo C.A."/>
        </authorList>
    </citation>
    <scope>NUCLEOTIDE SEQUENCE [LARGE SCALE GENOMIC DNA]</scope>
    <source>
        <strain>ATCC 6260 / CBS 566 / DSM 6381 / JCM 1539 / NBRC 10279 / NRRL Y-324</strain>
    </source>
</reference>
<organism>
    <name type="scientific">Meyerozyma guilliermondii (strain ATCC 6260 / CBS 566 / DSM 6381 / JCM 1539 / NBRC 10279 / NRRL Y-324)</name>
    <name type="common">Yeast</name>
    <name type="synonym">Candida guilliermondii</name>
    <dbReference type="NCBI Taxonomy" id="294746"/>
    <lineage>
        <taxon>Eukaryota</taxon>
        <taxon>Fungi</taxon>
        <taxon>Dikarya</taxon>
        <taxon>Ascomycota</taxon>
        <taxon>Saccharomycotina</taxon>
        <taxon>Pichiomycetes</taxon>
        <taxon>Debaryomycetaceae</taxon>
        <taxon>Meyerozyma</taxon>
    </lineage>
</organism>
<proteinExistence type="inferred from homology"/>